<feature type="chain" id="PRO_0000199105" description="Allophycocyanin beta chain">
    <location>
        <begin position="1"/>
        <end position="161"/>
    </location>
</feature>
<feature type="binding site" description="covalent" evidence="1">
    <location>
        <position position="81"/>
    </location>
    <ligand>
        <name>(2R,3E)-phycocyanobilin</name>
        <dbReference type="ChEBI" id="CHEBI:85275"/>
    </ligand>
</feature>
<feature type="modified residue" description="N4-methylasparagine" evidence="1">
    <location>
        <position position="71"/>
    </location>
</feature>
<feature type="helix" evidence="3">
    <location>
        <begin position="4"/>
        <end position="13"/>
    </location>
</feature>
<feature type="turn" evidence="3">
    <location>
        <begin position="14"/>
        <end position="16"/>
    </location>
</feature>
<feature type="helix" evidence="3">
    <location>
        <begin position="21"/>
        <end position="32"/>
    </location>
</feature>
<feature type="helix" evidence="3">
    <location>
        <begin position="34"/>
        <end position="59"/>
    </location>
</feature>
<feature type="turn" evidence="3">
    <location>
        <begin position="60"/>
        <end position="62"/>
    </location>
</feature>
<feature type="helix" evidence="3">
    <location>
        <begin position="64"/>
        <end position="66"/>
    </location>
</feature>
<feature type="helix" evidence="3">
    <location>
        <begin position="75"/>
        <end position="98"/>
    </location>
</feature>
<feature type="helix" evidence="3">
    <location>
        <begin position="102"/>
        <end position="107"/>
    </location>
</feature>
<feature type="helix" evidence="3">
    <location>
        <begin position="112"/>
        <end position="119"/>
    </location>
</feature>
<feature type="helix" evidence="3">
    <location>
        <begin position="123"/>
        <end position="141"/>
    </location>
</feature>
<feature type="helix" evidence="3">
    <location>
        <begin position="143"/>
        <end position="160"/>
    </location>
</feature>
<organism>
    <name type="scientific">Synechocystis sp. (strain ATCC 27184 / PCC 6803 / Kazusa)</name>
    <dbReference type="NCBI Taxonomy" id="1111708"/>
    <lineage>
        <taxon>Bacteria</taxon>
        <taxon>Bacillati</taxon>
        <taxon>Cyanobacteriota</taxon>
        <taxon>Cyanophyceae</taxon>
        <taxon>Synechococcales</taxon>
        <taxon>Merismopediaceae</taxon>
        <taxon>Synechocystis</taxon>
    </lineage>
</organism>
<proteinExistence type="evidence at protein level"/>
<sequence length="161" mass="17216">MQDAITAVINSADVQGKYLDGAAMDKLKSYFASGELRVRAASVISANAATIVKEAVAKSLLYSDVTRPGGNMYTTRRYAACIRDLDYYLRYATYAMLAGDASILDERVLNGLKETYNSLGVPISSTVQAIQAIKEVTASLVGADAGKEMGVYLDYICSGLS</sequence>
<accession>Q01952</accession>
<name>APCB_SYNY3</name>
<reference key="1">
    <citation type="journal article" date="1992" name="J. Biol. Chem.">
        <title>Excitation energy transfer from phycocyanin to chlorophyll in an apcA-defective mutant of Synechocystis sp. PCC 6803.</title>
        <authorList>
            <person name="Su X."/>
            <person name="Goodman P."/>
            <person name="Bogorad L."/>
        </authorList>
    </citation>
    <scope>NUCLEOTIDE SEQUENCE [GENOMIC DNA]</scope>
</reference>
<reference key="2">
    <citation type="journal article" date="1996" name="DNA Res.">
        <title>Sequence analysis of the genome of the unicellular cyanobacterium Synechocystis sp. strain PCC6803. II. Sequence determination of the entire genome and assignment of potential protein-coding regions.</title>
        <authorList>
            <person name="Kaneko T."/>
            <person name="Sato S."/>
            <person name="Kotani H."/>
            <person name="Tanaka A."/>
            <person name="Asamizu E."/>
            <person name="Nakamura Y."/>
            <person name="Miyajima N."/>
            <person name="Hirosawa M."/>
            <person name="Sugiura M."/>
            <person name="Sasamoto S."/>
            <person name="Kimura T."/>
            <person name="Hosouchi T."/>
            <person name="Matsuno A."/>
            <person name="Muraki A."/>
            <person name="Nakazaki N."/>
            <person name="Naruo K."/>
            <person name="Okumura S."/>
            <person name="Shimpo S."/>
            <person name="Takeuchi C."/>
            <person name="Wada T."/>
            <person name="Watanabe A."/>
            <person name="Yamada M."/>
            <person name="Yasuda M."/>
            <person name="Tabata S."/>
        </authorList>
    </citation>
    <scope>NUCLEOTIDE SEQUENCE [LARGE SCALE GENOMIC DNA]</scope>
    <source>
        <strain>ATCC 27184 / PCC 6803 / Kazusa</strain>
    </source>
</reference>
<reference key="3">
    <citation type="journal article" date="1997" name="Electrophoresis">
        <title>Towards a proteome project of cyanobacterium Synechocystis sp. strain PCC6803: linking 130 protein spots with their respective genes.</title>
        <authorList>
            <person name="Sazuka T."/>
            <person name="Ohara O."/>
        </authorList>
    </citation>
    <scope>PROTEIN SEQUENCE OF 1-20</scope>
</reference>
<keyword id="KW-0002">3D-structure</keyword>
<keyword id="KW-0042">Antenna complex</keyword>
<keyword id="KW-0089">Bile pigment</keyword>
<keyword id="KW-0157">Chromophore</keyword>
<keyword id="KW-0903">Direct protein sequencing</keyword>
<keyword id="KW-0249">Electron transport</keyword>
<keyword id="KW-0472">Membrane</keyword>
<keyword id="KW-0488">Methylation</keyword>
<keyword id="KW-0602">Photosynthesis</keyword>
<keyword id="KW-0605">Phycobilisome</keyword>
<keyword id="KW-1185">Reference proteome</keyword>
<keyword id="KW-0793">Thylakoid</keyword>
<keyword id="KW-0813">Transport</keyword>
<evidence type="ECO:0000250" key="1"/>
<evidence type="ECO:0000305" key="2"/>
<evidence type="ECO:0007829" key="3">
    <source>
        <dbReference type="PDB" id="4PO5"/>
    </source>
</evidence>
<dbReference type="EMBL" id="M77135">
    <property type="protein sequence ID" value="AAA27277.1"/>
    <property type="molecule type" value="Genomic_DNA"/>
</dbReference>
<dbReference type="EMBL" id="BA000022">
    <property type="protein sequence ID" value="BAA17875.1"/>
    <property type="molecule type" value="Genomic_DNA"/>
</dbReference>
<dbReference type="PIR" id="B44462">
    <property type="entry name" value="B44462"/>
</dbReference>
<dbReference type="PDB" id="4PO5">
    <property type="method" value="X-ray"/>
    <property type="resolution" value="1.75 A"/>
    <property type="chains" value="B/D/F=1-161"/>
</dbReference>
<dbReference type="PDB" id="7SC7">
    <property type="method" value="EM"/>
    <property type="resolution" value="2.80 A"/>
    <property type="chains" value="AB/AD/AF/AI/AL/AO/AQ/AS/AU/AW/AY/BI/BK/BM/BP/BS/BV/BX/BZ/CC/CE/CG/CQ/CS/CU/CX/CZ/DB/DH/DJ=1-161"/>
</dbReference>
<dbReference type="PDB" id="7SC9">
    <property type="method" value="EM"/>
    <property type="resolution" value="2.60 A"/>
    <property type="chains" value="AB/AD/AF/AI/AL/AO/AQ/AS/AU/AW/AY/BJ/BL/BN/BQ/BT/BW/BY/CA/CD/CF/CH/CS/CU/CW/CZ/DB/DD/DK/DM=1-161"/>
</dbReference>
<dbReference type="PDB" id="7SCB">
    <property type="method" value="EM"/>
    <property type="resolution" value="2.50 A"/>
    <property type="chains" value="AB/AD/AF/AI/AL/AO/AQ/AS/AV/AX/AZ=1-161"/>
</dbReference>
<dbReference type="PDB" id="7SCC">
    <property type="method" value="EM"/>
    <property type="resolution" value="2.60 A"/>
    <property type="chains" value="AB/AD/AF/AI/AK/AM/AX/AZ/BB/BE/BG/BI=1-161"/>
</dbReference>
<dbReference type="PDB" id="8TO2">
    <property type="method" value="EM"/>
    <property type="resolution" value="2.00 A"/>
    <property type="chains" value="E/G/I/K/M/O/e/g/i/k/m=1-161"/>
</dbReference>
<dbReference type="PDB" id="8TPJ">
    <property type="method" value="EM"/>
    <property type="resolution" value="2.10 A"/>
    <property type="chains" value="E/G/I/K/M/O=1-161"/>
</dbReference>
<dbReference type="PDBsum" id="4PO5"/>
<dbReference type="PDBsum" id="7SC7"/>
<dbReference type="PDBsum" id="7SC9"/>
<dbReference type="PDBsum" id="7SCB"/>
<dbReference type="PDBsum" id="7SCC"/>
<dbReference type="PDBsum" id="8TO2"/>
<dbReference type="PDBsum" id="8TPJ"/>
<dbReference type="EMDB" id="EMD-25028"/>
<dbReference type="EMDB" id="EMD-25030"/>
<dbReference type="EMDB" id="EMD-25032"/>
<dbReference type="EMDB" id="EMD-25033"/>
<dbReference type="EMDB" id="EMD-41434"/>
<dbReference type="EMDB" id="EMD-41475"/>
<dbReference type="SMR" id="Q01952"/>
<dbReference type="IntAct" id="Q01952">
    <property type="interactions" value="2"/>
</dbReference>
<dbReference type="STRING" id="1148.gene:10498744"/>
<dbReference type="PaxDb" id="1148-1652958"/>
<dbReference type="EnsemblBacteria" id="BAA17875">
    <property type="protein sequence ID" value="BAA17875"/>
    <property type="gene ID" value="BAA17875"/>
</dbReference>
<dbReference type="KEGG" id="syn:slr1986"/>
<dbReference type="eggNOG" id="ENOG502Z7X0">
    <property type="taxonomic scope" value="Bacteria"/>
</dbReference>
<dbReference type="InParanoid" id="Q01952"/>
<dbReference type="PhylomeDB" id="Q01952"/>
<dbReference type="EvolutionaryTrace" id="Q01952"/>
<dbReference type="Proteomes" id="UP000001425">
    <property type="component" value="Chromosome"/>
</dbReference>
<dbReference type="GO" id="GO:0030089">
    <property type="term" value="C:phycobilisome"/>
    <property type="evidence" value="ECO:0000318"/>
    <property type="project" value="GO_Central"/>
</dbReference>
<dbReference type="GO" id="GO:0031676">
    <property type="term" value="C:plasma membrane-derived thylakoid membrane"/>
    <property type="evidence" value="ECO:0007669"/>
    <property type="project" value="UniProtKB-SubCell"/>
</dbReference>
<dbReference type="GO" id="GO:0015979">
    <property type="term" value="P:photosynthesis"/>
    <property type="evidence" value="ECO:0007669"/>
    <property type="project" value="UniProtKB-KW"/>
</dbReference>
<dbReference type="CDD" id="cd12126">
    <property type="entry name" value="APC_beta"/>
    <property type="match status" value="1"/>
</dbReference>
<dbReference type="Gene3D" id="1.10.490.20">
    <property type="entry name" value="Phycocyanins"/>
    <property type="match status" value="1"/>
</dbReference>
<dbReference type="InterPro" id="IPR006245">
    <property type="entry name" value="Allophycocyanin_b"/>
</dbReference>
<dbReference type="InterPro" id="IPR009050">
    <property type="entry name" value="Globin-like_sf"/>
</dbReference>
<dbReference type="InterPro" id="IPR012128">
    <property type="entry name" value="Phycobilisome_asu/bsu"/>
</dbReference>
<dbReference type="InterPro" id="IPR038719">
    <property type="entry name" value="Phycobilisome_asu/bsu_sf"/>
</dbReference>
<dbReference type="NCBIfam" id="TIGR01337">
    <property type="entry name" value="apcB"/>
    <property type="match status" value="1"/>
</dbReference>
<dbReference type="PANTHER" id="PTHR34011:SF3">
    <property type="entry name" value="ALLOPHYCOCYANIN BETA CHAIN"/>
    <property type="match status" value="1"/>
</dbReference>
<dbReference type="PANTHER" id="PTHR34011">
    <property type="entry name" value="PHYCOBILISOME 32.1 KDA LINKER POLYPEPTIDE, PHYCOCYANIN-ASSOCIATED, ROD 2-RELATED"/>
    <property type="match status" value="1"/>
</dbReference>
<dbReference type="Pfam" id="PF00502">
    <property type="entry name" value="Phycobilisome"/>
    <property type="match status" value="1"/>
</dbReference>
<dbReference type="PIRSF" id="PIRSF000081">
    <property type="entry name" value="Phycocyanin"/>
    <property type="match status" value="1"/>
</dbReference>
<dbReference type="SUPFAM" id="SSF46458">
    <property type="entry name" value="Globin-like"/>
    <property type="match status" value="1"/>
</dbReference>
<protein>
    <recommendedName>
        <fullName>Allophycocyanin beta chain</fullName>
    </recommendedName>
</protein>
<comment type="function">
    <text>Light-harvesting photosynthetic bile pigment-protein from the phycobiliprotein complex. Allophycocyanin has a maximum absorption at approximately 650 nanometers.</text>
</comment>
<comment type="subunit">
    <text evidence="1">Heterodimer of an alpha and a beta chain.</text>
</comment>
<comment type="subcellular location">
    <subcellularLocation>
        <location evidence="1">Cellular thylakoid membrane</location>
        <topology evidence="1">Peripheral membrane protein</topology>
        <orientation evidence="1">Cytoplasmic side</orientation>
    </subcellularLocation>
    <text evidence="1">Forms the core of the phycobilisome.</text>
</comment>
<comment type="PTM">
    <text evidence="1">Contains one covalently linked phycocyanobilin chromophore.</text>
</comment>
<comment type="similarity">
    <text evidence="2">Belongs to the phycobiliprotein family.</text>
</comment>
<gene>
    <name type="primary">apcB</name>
    <name type="ordered locus">slr1986</name>
</gene>